<sequence>MPPASDAHAAPDAAASTSASPQSCAAPPDTLPVTVRWLGETPYDACFDAMRAFTDARTPDTGDEIWVVEHPPVYTLGQAGNPAHLLVADSGVPLVKVDRGGQITYHGPGQIVAYLLIDLRRRKLMVRTLVTRIEQAVIETLAAYNLASVRKAGAPGIYVESGPHHGAKIAALGLKIRNGCSYHGLSVNVKMDLRPFLAINPCGYAGLETVDMASLGATADWHEVARTLVRRLIANLDGATAAAALPQQALEQSND</sequence>
<protein>
    <recommendedName>
        <fullName evidence="1">Octanoyltransferase</fullName>
        <ecNumber evidence="1">2.3.1.181</ecNumber>
    </recommendedName>
    <alternativeName>
        <fullName evidence="1">Lipoate-protein ligase B</fullName>
    </alternativeName>
    <alternativeName>
        <fullName evidence="1">Lipoyl/octanoyl transferase</fullName>
    </alternativeName>
    <alternativeName>
        <fullName evidence="1">Octanoyl-[acyl-carrier-protein]-protein N-octanoyltransferase</fullName>
    </alternativeName>
</protein>
<keyword id="KW-0012">Acyltransferase</keyword>
<keyword id="KW-0963">Cytoplasm</keyword>
<keyword id="KW-0808">Transferase</keyword>
<proteinExistence type="inferred from homology"/>
<reference key="1">
    <citation type="journal article" date="2005" name="BMC Genomics">
        <title>Bacterial genome adaptation to niches: divergence of the potential virulence genes in three Burkholderia species of different survival strategies.</title>
        <authorList>
            <person name="Kim H.S."/>
            <person name="Schell M.A."/>
            <person name="Yu Y."/>
            <person name="Ulrich R.L."/>
            <person name="Sarria S.H."/>
            <person name="Nierman W.C."/>
            <person name="DeShazer D."/>
        </authorList>
    </citation>
    <scope>NUCLEOTIDE SEQUENCE [LARGE SCALE GENOMIC DNA]</scope>
    <source>
        <strain>ATCC 700388 / DSM 13276 / CCUG 48851 / CIP 106301 / E264</strain>
    </source>
</reference>
<feature type="chain" id="PRO_0000242713" description="Octanoyltransferase">
    <location>
        <begin position="1"/>
        <end position="255"/>
    </location>
</feature>
<feature type="domain" description="BPL/LPL catalytic" evidence="2">
    <location>
        <begin position="59"/>
        <end position="240"/>
    </location>
</feature>
<feature type="region of interest" description="Disordered" evidence="3">
    <location>
        <begin position="1"/>
        <end position="27"/>
    </location>
</feature>
<feature type="active site" description="Acyl-thioester intermediate" evidence="1">
    <location>
        <position position="202"/>
    </location>
</feature>
<feature type="binding site" evidence="1">
    <location>
        <begin position="99"/>
        <end position="106"/>
    </location>
    <ligand>
        <name>substrate</name>
    </ligand>
</feature>
<feature type="binding site" evidence="1">
    <location>
        <begin position="171"/>
        <end position="173"/>
    </location>
    <ligand>
        <name>substrate</name>
    </ligand>
</feature>
<feature type="binding site" evidence="1">
    <location>
        <begin position="184"/>
        <end position="186"/>
    </location>
    <ligand>
        <name>substrate</name>
    </ligand>
</feature>
<feature type="site" description="Lowers pKa of active site Cys" evidence="1">
    <location>
        <position position="168"/>
    </location>
</feature>
<organism>
    <name type="scientific">Burkholderia thailandensis (strain ATCC 700388 / DSM 13276 / CCUG 48851 / CIP 106301 / E264)</name>
    <dbReference type="NCBI Taxonomy" id="271848"/>
    <lineage>
        <taxon>Bacteria</taxon>
        <taxon>Pseudomonadati</taxon>
        <taxon>Pseudomonadota</taxon>
        <taxon>Betaproteobacteria</taxon>
        <taxon>Burkholderiales</taxon>
        <taxon>Burkholderiaceae</taxon>
        <taxon>Burkholderia</taxon>
        <taxon>pseudomallei group</taxon>
    </lineage>
</organism>
<name>LIPB_BURTA</name>
<comment type="function">
    <text evidence="1">Catalyzes the transfer of endogenously produced octanoic acid from octanoyl-acyl-carrier-protein onto the lipoyl domains of lipoate-dependent enzymes. Lipoyl-ACP can also act as a substrate although octanoyl-ACP is likely to be the physiological substrate.</text>
</comment>
<comment type="catalytic activity">
    <reaction evidence="1">
        <text>octanoyl-[ACP] + L-lysyl-[protein] = N(6)-octanoyl-L-lysyl-[protein] + holo-[ACP] + H(+)</text>
        <dbReference type="Rhea" id="RHEA:17665"/>
        <dbReference type="Rhea" id="RHEA-COMP:9636"/>
        <dbReference type="Rhea" id="RHEA-COMP:9685"/>
        <dbReference type="Rhea" id="RHEA-COMP:9752"/>
        <dbReference type="Rhea" id="RHEA-COMP:9928"/>
        <dbReference type="ChEBI" id="CHEBI:15378"/>
        <dbReference type="ChEBI" id="CHEBI:29969"/>
        <dbReference type="ChEBI" id="CHEBI:64479"/>
        <dbReference type="ChEBI" id="CHEBI:78463"/>
        <dbReference type="ChEBI" id="CHEBI:78809"/>
        <dbReference type="EC" id="2.3.1.181"/>
    </reaction>
</comment>
<comment type="pathway">
    <text evidence="1">Protein modification; protein lipoylation via endogenous pathway; protein N(6)-(lipoyl)lysine from octanoyl-[acyl-carrier-protein]: step 1/2.</text>
</comment>
<comment type="subcellular location">
    <subcellularLocation>
        <location evidence="1">Cytoplasm</location>
    </subcellularLocation>
</comment>
<comment type="miscellaneous">
    <text evidence="1">In the reaction, the free carboxyl group of octanoic acid is attached via an amide linkage to the epsilon-amino group of a specific lysine residue of lipoyl domains of lipoate-dependent enzymes.</text>
</comment>
<comment type="similarity">
    <text evidence="1">Belongs to the LipB family.</text>
</comment>
<dbReference type="EC" id="2.3.1.181" evidence="1"/>
<dbReference type="EMBL" id="CP000086">
    <property type="protein sequence ID" value="ABC36911.1"/>
    <property type="molecule type" value="Genomic_DNA"/>
</dbReference>
<dbReference type="SMR" id="Q2T1K6"/>
<dbReference type="KEGG" id="bte:BTH_I0385"/>
<dbReference type="HOGENOM" id="CLU_035168_3_1_4"/>
<dbReference type="UniPathway" id="UPA00538">
    <property type="reaction ID" value="UER00592"/>
</dbReference>
<dbReference type="Proteomes" id="UP000001930">
    <property type="component" value="Chromosome I"/>
</dbReference>
<dbReference type="GO" id="GO:0005737">
    <property type="term" value="C:cytoplasm"/>
    <property type="evidence" value="ECO:0007669"/>
    <property type="project" value="UniProtKB-SubCell"/>
</dbReference>
<dbReference type="GO" id="GO:0033819">
    <property type="term" value="F:lipoyl(octanoyl) transferase activity"/>
    <property type="evidence" value="ECO:0007669"/>
    <property type="project" value="UniProtKB-EC"/>
</dbReference>
<dbReference type="GO" id="GO:0036211">
    <property type="term" value="P:protein modification process"/>
    <property type="evidence" value="ECO:0007669"/>
    <property type="project" value="InterPro"/>
</dbReference>
<dbReference type="CDD" id="cd16444">
    <property type="entry name" value="LipB"/>
    <property type="match status" value="1"/>
</dbReference>
<dbReference type="FunFam" id="3.30.930.10:FF:000020">
    <property type="entry name" value="Octanoyltransferase"/>
    <property type="match status" value="1"/>
</dbReference>
<dbReference type="Gene3D" id="3.30.930.10">
    <property type="entry name" value="Bira Bifunctional Protein, Domain 2"/>
    <property type="match status" value="1"/>
</dbReference>
<dbReference type="HAMAP" id="MF_00013">
    <property type="entry name" value="LipB"/>
    <property type="match status" value="1"/>
</dbReference>
<dbReference type="InterPro" id="IPR045864">
    <property type="entry name" value="aa-tRNA-synth_II/BPL/LPL"/>
</dbReference>
<dbReference type="InterPro" id="IPR004143">
    <property type="entry name" value="BPL_LPL_catalytic"/>
</dbReference>
<dbReference type="InterPro" id="IPR000544">
    <property type="entry name" value="Octanoyltransferase"/>
</dbReference>
<dbReference type="InterPro" id="IPR020605">
    <property type="entry name" value="Octanoyltransferase_CS"/>
</dbReference>
<dbReference type="NCBIfam" id="TIGR00214">
    <property type="entry name" value="lipB"/>
    <property type="match status" value="1"/>
</dbReference>
<dbReference type="NCBIfam" id="NF010922">
    <property type="entry name" value="PRK14342.1"/>
    <property type="match status" value="1"/>
</dbReference>
<dbReference type="NCBIfam" id="NF010923">
    <property type="entry name" value="PRK14343.1"/>
    <property type="match status" value="1"/>
</dbReference>
<dbReference type="PANTHER" id="PTHR10993:SF7">
    <property type="entry name" value="LIPOYLTRANSFERASE 2, MITOCHONDRIAL-RELATED"/>
    <property type="match status" value="1"/>
</dbReference>
<dbReference type="PANTHER" id="PTHR10993">
    <property type="entry name" value="OCTANOYLTRANSFERASE"/>
    <property type="match status" value="1"/>
</dbReference>
<dbReference type="Pfam" id="PF21948">
    <property type="entry name" value="LplA-B_cat"/>
    <property type="match status" value="1"/>
</dbReference>
<dbReference type="PIRSF" id="PIRSF016262">
    <property type="entry name" value="LPLase"/>
    <property type="match status" value="1"/>
</dbReference>
<dbReference type="SUPFAM" id="SSF55681">
    <property type="entry name" value="Class II aaRS and biotin synthetases"/>
    <property type="match status" value="1"/>
</dbReference>
<dbReference type="PROSITE" id="PS51733">
    <property type="entry name" value="BPL_LPL_CATALYTIC"/>
    <property type="match status" value="1"/>
</dbReference>
<dbReference type="PROSITE" id="PS01313">
    <property type="entry name" value="LIPB"/>
    <property type="match status" value="1"/>
</dbReference>
<accession>Q2T1K6</accession>
<gene>
    <name evidence="1" type="primary">lipB</name>
    <name type="ordered locus">BTH_I0385</name>
</gene>
<evidence type="ECO:0000255" key="1">
    <source>
        <dbReference type="HAMAP-Rule" id="MF_00013"/>
    </source>
</evidence>
<evidence type="ECO:0000255" key="2">
    <source>
        <dbReference type="PROSITE-ProRule" id="PRU01067"/>
    </source>
</evidence>
<evidence type="ECO:0000256" key="3">
    <source>
        <dbReference type="SAM" id="MobiDB-lite"/>
    </source>
</evidence>